<comment type="function">
    <text evidence="1">Probable component of the endoplasmic reticulum-associated degradation (ERAD) pathway.</text>
</comment>
<comment type="similarity">
    <text evidence="3">Belongs to the LCL2 family.</text>
</comment>
<accession>A5E0N1</accession>
<organism>
    <name type="scientific">Lodderomyces elongisporus (strain ATCC 11503 / CBS 2605 / JCM 1781 / NBRC 1676 / NRRL YB-4239)</name>
    <name type="common">Yeast</name>
    <name type="synonym">Saccharomyces elongisporus</name>
    <dbReference type="NCBI Taxonomy" id="379508"/>
    <lineage>
        <taxon>Eukaryota</taxon>
        <taxon>Fungi</taxon>
        <taxon>Dikarya</taxon>
        <taxon>Ascomycota</taxon>
        <taxon>Saccharomycotina</taxon>
        <taxon>Pichiomycetes</taxon>
        <taxon>Debaryomycetaceae</taxon>
        <taxon>Candida/Lodderomyces clade</taxon>
        <taxon>Lodderomyces</taxon>
    </lineage>
</organism>
<protein>
    <recommendedName>
        <fullName>Long chronological lifespan protein 2</fullName>
    </recommendedName>
</protein>
<reference key="1">
    <citation type="journal article" date="2009" name="Nature">
        <title>Evolution of pathogenicity and sexual reproduction in eight Candida genomes.</title>
        <authorList>
            <person name="Butler G."/>
            <person name="Rasmussen M.D."/>
            <person name="Lin M.F."/>
            <person name="Santos M.A.S."/>
            <person name="Sakthikumar S."/>
            <person name="Munro C.A."/>
            <person name="Rheinbay E."/>
            <person name="Grabherr M."/>
            <person name="Forche A."/>
            <person name="Reedy J.L."/>
            <person name="Agrafioti I."/>
            <person name="Arnaud M.B."/>
            <person name="Bates S."/>
            <person name="Brown A.J.P."/>
            <person name="Brunke S."/>
            <person name="Costanzo M.C."/>
            <person name="Fitzpatrick D.A."/>
            <person name="de Groot P.W.J."/>
            <person name="Harris D."/>
            <person name="Hoyer L.L."/>
            <person name="Hube B."/>
            <person name="Klis F.M."/>
            <person name="Kodira C."/>
            <person name="Lennard N."/>
            <person name="Logue M.E."/>
            <person name="Martin R."/>
            <person name="Neiman A.M."/>
            <person name="Nikolaou E."/>
            <person name="Quail M.A."/>
            <person name="Quinn J."/>
            <person name="Santos M.C."/>
            <person name="Schmitzberger F.F."/>
            <person name="Sherlock G."/>
            <person name="Shah P."/>
            <person name="Silverstein K.A.T."/>
            <person name="Skrzypek M.S."/>
            <person name="Soll D."/>
            <person name="Staggs R."/>
            <person name="Stansfield I."/>
            <person name="Stumpf M.P.H."/>
            <person name="Sudbery P.E."/>
            <person name="Srikantha T."/>
            <person name="Zeng Q."/>
            <person name="Berman J."/>
            <person name="Berriman M."/>
            <person name="Heitman J."/>
            <person name="Gow N.A.R."/>
            <person name="Lorenz M.C."/>
            <person name="Birren B.W."/>
            <person name="Kellis M."/>
            <person name="Cuomo C.A."/>
        </authorList>
    </citation>
    <scope>NUCLEOTIDE SEQUENCE [LARGE SCALE GENOMIC DNA]</scope>
    <source>
        <strain>ATCC 11503 / BCRC 21390 / CBS 2605 / JCM 1781 / NBRC 1676 / NRRL YB-4239</strain>
    </source>
</reference>
<sequence>MLQKFLICLSLIFTLASANLFDFLNNQFQGGNGGGGGGRHQNGGSKSPQQHEEAMLNANCNTYLCPDTGICVDAPKFCPCPYPSSQLRCFLPDGRYVCISKPAGYGIADKYNDPQTNFKIDAKDDNIRDCGWVNRAWRNEKLKK</sequence>
<gene>
    <name type="primary">LCL2</name>
    <name type="ORF">LELG_03168</name>
</gene>
<feature type="signal peptide" evidence="2">
    <location>
        <begin position="1"/>
        <end position="18"/>
    </location>
</feature>
<feature type="chain" id="PRO_0000408611" description="Long chronological lifespan protein 2">
    <location>
        <begin position="19"/>
        <end position="144"/>
    </location>
</feature>
<keyword id="KW-1185">Reference proteome</keyword>
<keyword id="KW-0732">Signal</keyword>
<dbReference type="EMBL" id="CH981527">
    <property type="protein sequence ID" value="EDK44989.1"/>
    <property type="molecule type" value="Genomic_DNA"/>
</dbReference>
<dbReference type="RefSeq" id="XP_001525240.1">
    <property type="nucleotide sequence ID" value="XM_001525190.1"/>
</dbReference>
<dbReference type="SMR" id="A5E0N1"/>
<dbReference type="FunCoup" id="A5E0N1">
    <property type="interactions" value="10"/>
</dbReference>
<dbReference type="STRING" id="379508.A5E0N1"/>
<dbReference type="GeneID" id="5232504"/>
<dbReference type="KEGG" id="lel:PVL30_002662"/>
<dbReference type="VEuPathDB" id="FungiDB:LELG_03168"/>
<dbReference type="eggNOG" id="ENOG502S416">
    <property type="taxonomic scope" value="Eukaryota"/>
</dbReference>
<dbReference type="HOGENOM" id="CLU_142363_1_0_1"/>
<dbReference type="InParanoid" id="A5E0N1"/>
<dbReference type="OMA" id="DNYLCPD"/>
<dbReference type="OrthoDB" id="2234316at2759"/>
<dbReference type="Proteomes" id="UP000001996">
    <property type="component" value="Unassembled WGS sequence"/>
</dbReference>
<dbReference type="GO" id="GO:0036503">
    <property type="term" value="P:ERAD pathway"/>
    <property type="evidence" value="ECO:0007669"/>
    <property type="project" value="TreeGrafter"/>
</dbReference>
<dbReference type="CDD" id="cd23996">
    <property type="entry name" value="LCL2-like"/>
    <property type="match status" value="1"/>
</dbReference>
<dbReference type="InterPro" id="IPR034543">
    <property type="entry name" value="LCL2"/>
</dbReference>
<dbReference type="PANTHER" id="PTHR38425">
    <property type="entry name" value="LONG CHRONOLOGICAL LIFESPAN PROTEIN 2"/>
    <property type="match status" value="1"/>
</dbReference>
<dbReference type="PANTHER" id="PTHR38425:SF1">
    <property type="entry name" value="LONG CHRONOLOGICAL LIFESPAN PROTEIN 2"/>
    <property type="match status" value="1"/>
</dbReference>
<name>LCL2_LODEL</name>
<evidence type="ECO:0000250" key="1"/>
<evidence type="ECO:0000255" key="2"/>
<evidence type="ECO:0000305" key="3"/>
<proteinExistence type="inferred from homology"/>